<sequence length="298" mass="32715">MAVSARDYWDLTKPKVVALIVFTALVGMFLAIPDMPTWLQVRTGALGFLGIWLAASAAAAINQLLDAKIDAQMARTSWRPLVVGKVRPWQVLVFAGALIVISMTILVVWVNVITAVLTFASLIGYAVIYTVYLKRATSQNIVIGGLAGATPPMLGWAAVTGLPTSADWINASLLVLIIFIWTPPHFWALAIFRRADYAKAAIPMLPVTHGVPHTRKQILVYTVLLAIVTLAPVAVGMSGVFYLGGAIVLNAVFLWYAWRMLNPPDELFSMKMFGYSIVYLMALFAFLMVDHLLLPWVR</sequence>
<name>CYOE_XANE5</name>
<comment type="function">
    <text evidence="1">Converts heme B (protoheme IX) to heme O by substitution of the vinyl group on carbon 2 of heme B porphyrin ring with a hydroxyethyl farnesyl side group.</text>
</comment>
<comment type="catalytic activity">
    <reaction evidence="1">
        <text>heme b + (2E,6E)-farnesyl diphosphate + H2O = Fe(II)-heme o + diphosphate</text>
        <dbReference type="Rhea" id="RHEA:28070"/>
        <dbReference type="ChEBI" id="CHEBI:15377"/>
        <dbReference type="ChEBI" id="CHEBI:33019"/>
        <dbReference type="ChEBI" id="CHEBI:60344"/>
        <dbReference type="ChEBI" id="CHEBI:60530"/>
        <dbReference type="ChEBI" id="CHEBI:175763"/>
        <dbReference type="EC" id="2.5.1.141"/>
    </reaction>
</comment>
<comment type="pathway">
    <text evidence="1">Porphyrin-containing compound metabolism; heme O biosynthesis; heme O from protoheme: step 1/1.</text>
</comment>
<comment type="subcellular location">
    <subcellularLocation>
        <location evidence="1">Cell inner membrane</location>
        <topology evidence="1">Multi-pass membrane protein</topology>
    </subcellularLocation>
</comment>
<comment type="miscellaneous">
    <text evidence="1">Carbon 2 of the heme B porphyrin ring is defined according to the Fischer nomenclature.</text>
</comment>
<comment type="similarity">
    <text evidence="1">Belongs to the UbiA prenyltransferase family. Protoheme IX farnesyltransferase subfamily.</text>
</comment>
<reference key="1">
    <citation type="journal article" date="2005" name="J. Bacteriol.">
        <title>Insights into genome plasticity and pathogenicity of the plant pathogenic Bacterium Xanthomonas campestris pv. vesicatoria revealed by the complete genome sequence.</title>
        <authorList>
            <person name="Thieme F."/>
            <person name="Koebnik R."/>
            <person name="Bekel T."/>
            <person name="Berger C."/>
            <person name="Boch J."/>
            <person name="Buettner D."/>
            <person name="Caldana C."/>
            <person name="Gaigalat L."/>
            <person name="Goesmann A."/>
            <person name="Kay S."/>
            <person name="Kirchner O."/>
            <person name="Lanz C."/>
            <person name="Linke B."/>
            <person name="McHardy A.C."/>
            <person name="Meyer F."/>
            <person name="Mittenhuber G."/>
            <person name="Nies D.H."/>
            <person name="Niesbach-Kloesgen U."/>
            <person name="Patschkowski T."/>
            <person name="Rueckert C."/>
            <person name="Rupp O."/>
            <person name="Schneiker S."/>
            <person name="Schuster S.C."/>
            <person name="Vorhoelter F.J."/>
            <person name="Weber E."/>
            <person name="Puehler A."/>
            <person name="Bonas U."/>
            <person name="Bartels D."/>
            <person name="Kaiser O."/>
        </authorList>
    </citation>
    <scope>NUCLEOTIDE SEQUENCE [LARGE SCALE GENOMIC DNA]</scope>
    <source>
        <strain>85-10</strain>
    </source>
</reference>
<organism>
    <name type="scientific">Xanthomonas euvesicatoria pv. vesicatoria (strain 85-10)</name>
    <name type="common">Xanthomonas campestris pv. vesicatoria</name>
    <dbReference type="NCBI Taxonomy" id="316273"/>
    <lineage>
        <taxon>Bacteria</taxon>
        <taxon>Pseudomonadati</taxon>
        <taxon>Pseudomonadota</taxon>
        <taxon>Gammaproteobacteria</taxon>
        <taxon>Lysobacterales</taxon>
        <taxon>Lysobacteraceae</taxon>
        <taxon>Xanthomonas</taxon>
    </lineage>
</organism>
<protein>
    <recommendedName>
        <fullName evidence="1">Protoheme IX farnesyltransferase</fullName>
        <ecNumber evidence="1">2.5.1.141</ecNumber>
    </recommendedName>
    <alternativeName>
        <fullName evidence="1">Heme B farnesyltransferase</fullName>
    </alternativeName>
    <alternativeName>
        <fullName evidence="1">Heme O synthase</fullName>
    </alternativeName>
</protein>
<evidence type="ECO:0000255" key="1">
    <source>
        <dbReference type="HAMAP-Rule" id="MF_00154"/>
    </source>
</evidence>
<feature type="chain" id="PRO_0000326972" description="Protoheme IX farnesyltransferase">
    <location>
        <begin position="1"/>
        <end position="298"/>
    </location>
</feature>
<feature type="transmembrane region" description="Helical" evidence="1">
    <location>
        <begin position="16"/>
        <end position="36"/>
    </location>
</feature>
<feature type="transmembrane region" description="Helical" evidence="1">
    <location>
        <begin position="45"/>
        <end position="65"/>
    </location>
</feature>
<feature type="transmembrane region" description="Helical" evidence="1">
    <location>
        <begin position="93"/>
        <end position="113"/>
    </location>
</feature>
<feature type="transmembrane region" description="Helical" evidence="1">
    <location>
        <begin position="114"/>
        <end position="134"/>
    </location>
</feature>
<feature type="transmembrane region" description="Helical" evidence="1">
    <location>
        <begin position="141"/>
        <end position="161"/>
    </location>
</feature>
<feature type="transmembrane region" description="Helical" evidence="1">
    <location>
        <begin position="172"/>
        <end position="192"/>
    </location>
</feature>
<feature type="transmembrane region" description="Helical" evidence="1">
    <location>
        <begin position="223"/>
        <end position="243"/>
    </location>
</feature>
<feature type="transmembrane region" description="Helical" evidence="1">
    <location>
        <begin position="244"/>
        <end position="264"/>
    </location>
</feature>
<feature type="transmembrane region" description="Helical" evidence="1">
    <location>
        <begin position="277"/>
        <end position="297"/>
    </location>
</feature>
<keyword id="KW-0997">Cell inner membrane</keyword>
<keyword id="KW-1003">Cell membrane</keyword>
<keyword id="KW-0350">Heme biosynthesis</keyword>
<keyword id="KW-0472">Membrane</keyword>
<keyword id="KW-0808">Transferase</keyword>
<keyword id="KW-0812">Transmembrane</keyword>
<keyword id="KW-1133">Transmembrane helix</keyword>
<proteinExistence type="inferred from homology"/>
<accession>Q3BND5</accession>
<gene>
    <name evidence="1" type="primary">cyoE</name>
    <name type="ordered locus">XCV3997</name>
</gene>
<dbReference type="EC" id="2.5.1.141" evidence="1"/>
<dbReference type="EMBL" id="AM039952">
    <property type="protein sequence ID" value="CAJ25728.1"/>
    <property type="molecule type" value="Genomic_DNA"/>
</dbReference>
<dbReference type="RefSeq" id="WP_011348837.1">
    <property type="nucleotide sequence ID" value="NZ_CP017190.1"/>
</dbReference>
<dbReference type="SMR" id="Q3BND5"/>
<dbReference type="STRING" id="456327.BJD11_02645"/>
<dbReference type="GeneID" id="97512057"/>
<dbReference type="KEGG" id="xcv:XCV3997"/>
<dbReference type="eggNOG" id="COG0109">
    <property type="taxonomic scope" value="Bacteria"/>
</dbReference>
<dbReference type="HOGENOM" id="CLU_029631_0_2_6"/>
<dbReference type="UniPathway" id="UPA00834">
    <property type="reaction ID" value="UER00712"/>
</dbReference>
<dbReference type="Proteomes" id="UP000007069">
    <property type="component" value="Chromosome"/>
</dbReference>
<dbReference type="GO" id="GO:0005886">
    <property type="term" value="C:plasma membrane"/>
    <property type="evidence" value="ECO:0007669"/>
    <property type="project" value="UniProtKB-SubCell"/>
</dbReference>
<dbReference type="GO" id="GO:0008495">
    <property type="term" value="F:protoheme IX farnesyltransferase activity"/>
    <property type="evidence" value="ECO:0007669"/>
    <property type="project" value="UniProtKB-UniRule"/>
</dbReference>
<dbReference type="GO" id="GO:0048034">
    <property type="term" value="P:heme O biosynthetic process"/>
    <property type="evidence" value="ECO:0007669"/>
    <property type="project" value="UniProtKB-UniRule"/>
</dbReference>
<dbReference type="CDD" id="cd13957">
    <property type="entry name" value="PT_UbiA_Cox10"/>
    <property type="match status" value="1"/>
</dbReference>
<dbReference type="FunFam" id="1.10.357.140:FF:000001">
    <property type="entry name" value="Protoheme IX farnesyltransferase"/>
    <property type="match status" value="1"/>
</dbReference>
<dbReference type="Gene3D" id="1.10.357.140">
    <property type="entry name" value="UbiA prenyltransferase"/>
    <property type="match status" value="1"/>
</dbReference>
<dbReference type="HAMAP" id="MF_00154">
    <property type="entry name" value="CyoE_CtaB"/>
    <property type="match status" value="1"/>
</dbReference>
<dbReference type="InterPro" id="IPR006369">
    <property type="entry name" value="Protohaem_IX_farnesylTrfase"/>
</dbReference>
<dbReference type="InterPro" id="IPR000537">
    <property type="entry name" value="UbiA_prenyltransferase"/>
</dbReference>
<dbReference type="InterPro" id="IPR030470">
    <property type="entry name" value="UbiA_prenylTrfase_CS"/>
</dbReference>
<dbReference type="InterPro" id="IPR044878">
    <property type="entry name" value="UbiA_sf"/>
</dbReference>
<dbReference type="NCBIfam" id="TIGR01473">
    <property type="entry name" value="cyoE_ctaB"/>
    <property type="match status" value="1"/>
</dbReference>
<dbReference type="NCBIfam" id="NF003349">
    <property type="entry name" value="PRK04375.1-2"/>
    <property type="match status" value="1"/>
</dbReference>
<dbReference type="PANTHER" id="PTHR43448:SF7">
    <property type="entry name" value="4-HYDROXYBENZOATE SOLANESYLTRANSFERASE"/>
    <property type="match status" value="1"/>
</dbReference>
<dbReference type="PANTHER" id="PTHR43448">
    <property type="entry name" value="PROTOHEME IX FARNESYLTRANSFERASE, MITOCHONDRIAL"/>
    <property type="match status" value="1"/>
</dbReference>
<dbReference type="Pfam" id="PF01040">
    <property type="entry name" value="UbiA"/>
    <property type="match status" value="1"/>
</dbReference>
<dbReference type="PROSITE" id="PS00943">
    <property type="entry name" value="UBIA"/>
    <property type="match status" value="1"/>
</dbReference>